<organism>
    <name type="scientific">Dipodomys californicus</name>
    <name type="common">California kangaroo rat</name>
    <dbReference type="NCBI Taxonomy" id="10017"/>
    <lineage>
        <taxon>Eukaryota</taxon>
        <taxon>Metazoa</taxon>
        <taxon>Chordata</taxon>
        <taxon>Craniata</taxon>
        <taxon>Vertebrata</taxon>
        <taxon>Euteleostomi</taxon>
        <taxon>Mammalia</taxon>
        <taxon>Eutheria</taxon>
        <taxon>Euarchontoglires</taxon>
        <taxon>Glires</taxon>
        <taxon>Rodentia</taxon>
        <taxon>Castorimorpha</taxon>
        <taxon>Heteromyidae</taxon>
        <taxon>Dipodomyinae</taxon>
        <taxon>Dipodomys</taxon>
    </lineage>
</organism>
<comment type="function">
    <text evidence="2">Component of the ubiquinol-cytochrome c reductase complex (complex III or cytochrome b-c1 complex) that is part of the mitochondrial respiratory chain. The b-c1 complex mediates electron transfer from ubiquinol to cytochrome c. Contributes to the generation of a proton gradient across the mitochondrial membrane that is then used for ATP synthesis.</text>
</comment>
<comment type="cofactor">
    <cofactor evidence="2">
        <name>heme b</name>
        <dbReference type="ChEBI" id="CHEBI:60344"/>
    </cofactor>
    <text evidence="2">Binds 2 heme b groups non-covalently.</text>
</comment>
<comment type="subunit">
    <text evidence="2">The cytochrome bc1 complex contains 11 subunits: 3 respiratory subunits (MT-CYB, CYC1 and UQCRFS1), 2 core proteins (UQCRC1 and UQCRC2) and 6 low-molecular weight proteins (UQCRH/QCR6, UQCRB/QCR7, UQCRQ/QCR8, UQCR10/QCR9, UQCR11/QCR10 and a cleavage product of UQCRFS1). This cytochrome bc1 complex then forms a dimer.</text>
</comment>
<comment type="subcellular location">
    <subcellularLocation>
        <location evidence="2">Mitochondrion inner membrane</location>
        <topology evidence="2">Multi-pass membrane protein</topology>
    </subcellularLocation>
</comment>
<comment type="miscellaneous">
    <text evidence="1">Heme 1 (or BL or b562) is low-potential and absorbs at about 562 nm, and heme 2 (or BH or b566) is high-potential and absorbs at about 566 nm.</text>
</comment>
<comment type="similarity">
    <text evidence="3">Belongs to the cytochrome b family.</text>
</comment>
<comment type="caution">
    <text evidence="2">The full-length protein contains only eight transmembrane helices, not nine as predicted by bioinformatics tools.</text>
</comment>
<reference key="1">
    <citation type="journal article" date="1989" name="Proc. Natl. Acad. Sci. U.S.A.">
        <title>Dynamics of mitochondrial DNA evolution in animals: amplification and sequencing with conserved primers.</title>
        <authorList>
            <person name="Kocher T.D."/>
            <person name="Thomas W.K."/>
            <person name="Meyer A."/>
            <person name="Edwards S.V."/>
            <person name="Paeaebo S."/>
            <person name="Villablanca F.X."/>
            <person name="Wilson A.C."/>
        </authorList>
    </citation>
    <scope>NUCLEOTIDE SEQUENCE [GENOMIC DNA]</scope>
</reference>
<protein>
    <recommendedName>
        <fullName>Cytochrome b</fullName>
    </recommendedName>
    <alternativeName>
        <fullName>Complex III subunit 3</fullName>
    </alternativeName>
    <alternativeName>
        <fullName>Complex III subunit III</fullName>
    </alternativeName>
    <alternativeName>
        <fullName>Cytochrome b-c1 complex subunit 3</fullName>
    </alternativeName>
    <alternativeName>
        <fullName>Ubiquinol-cytochrome-c reductase complex cytochrome b subunit</fullName>
    </alternativeName>
</protein>
<geneLocation type="mitochondrion"/>
<accession>P16359</accession>
<keyword id="KW-0249">Electron transport</keyword>
<keyword id="KW-0349">Heme</keyword>
<keyword id="KW-0408">Iron</keyword>
<keyword id="KW-0472">Membrane</keyword>
<keyword id="KW-0479">Metal-binding</keyword>
<keyword id="KW-0496">Mitochondrion</keyword>
<keyword id="KW-0999">Mitochondrion inner membrane</keyword>
<keyword id="KW-0679">Respiratory chain</keyword>
<keyword id="KW-0812">Transmembrane</keyword>
<keyword id="KW-1133">Transmembrane helix</keyword>
<keyword id="KW-0813">Transport</keyword>
<keyword id="KW-0830">Ubiquinone</keyword>
<proteinExistence type="inferred from homology"/>
<name>CYB_DIPCA</name>
<sequence length="79" mass="9068">SALFLAMHYTPDTLTAFSSVAHICRDVNYGWLIRYMHANGSSLFFICLYLHIGRGIYYGSYSYTETWNIGIILLFLTMA</sequence>
<feature type="chain" id="PRO_0000060887" description="Cytochrome b">
    <location>
        <begin position="1" status="less than"/>
        <end position="79" status="greater than"/>
    </location>
</feature>
<feature type="transmembrane region" description="Helical" evidence="2">
    <location>
        <begin position="1" status="less than"/>
        <end position="7"/>
    </location>
</feature>
<feature type="transmembrane region" description="Helical" evidence="2">
    <location>
        <begin position="31"/>
        <end position="52"/>
    </location>
</feature>
<feature type="transmembrane region" description="Helical" evidence="2">
    <location>
        <begin position="67"/>
        <end position="79" status="greater than"/>
    </location>
</feature>
<feature type="binding site" description="axial binding residue" evidence="2">
    <location>
        <position position="37"/>
    </location>
    <ligand>
        <name>heme b</name>
        <dbReference type="ChEBI" id="CHEBI:60344"/>
        <label>b562</label>
    </ligand>
    <ligandPart>
        <name>Fe</name>
        <dbReference type="ChEBI" id="CHEBI:18248"/>
    </ligandPart>
</feature>
<feature type="binding site" description="axial binding residue" evidence="2">
    <location>
        <position position="51"/>
    </location>
    <ligand>
        <name>heme b</name>
        <dbReference type="ChEBI" id="CHEBI:60344"/>
        <label>b566</label>
    </ligand>
    <ligandPart>
        <name>Fe</name>
        <dbReference type="ChEBI" id="CHEBI:18248"/>
    </ligandPart>
</feature>
<feature type="non-terminal residue">
    <location>
        <position position="1"/>
    </location>
</feature>
<feature type="non-terminal residue">
    <location>
        <position position="79"/>
    </location>
</feature>
<dbReference type="EMBL" id="M25684">
    <property type="protein sequence ID" value="AAA31715.1"/>
    <property type="molecule type" value="Genomic_DNA"/>
</dbReference>
<dbReference type="PIR" id="D33285">
    <property type="entry name" value="D33285"/>
</dbReference>
<dbReference type="SMR" id="P16359"/>
<dbReference type="GO" id="GO:0005743">
    <property type="term" value="C:mitochondrial inner membrane"/>
    <property type="evidence" value="ECO:0007669"/>
    <property type="project" value="UniProtKB-SubCell"/>
</dbReference>
<dbReference type="GO" id="GO:0046872">
    <property type="term" value="F:metal ion binding"/>
    <property type="evidence" value="ECO:0007669"/>
    <property type="project" value="UniProtKB-KW"/>
</dbReference>
<dbReference type="GO" id="GO:0008121">
    <property type="term" value="F:ubiquinol-cytochrome-c reductase activity"/>
    <property type="evidence" value="ECO:0007669"/>
    <property type="project" value="TreeGrafter"/>
</dbReference>
<dbReference type="GO" id="GO:0006122">
    <property type="term" value="P:mitochondrial electron transport, ubiquinol to cytochrome c"/>
    <property type="evidence" value="ECO:0007669"/>
    <property type="project" value="TreeGrafter"/>
</dbReference>
<dbReference type="Gene3D" id="1.20.810.10">
    <property type="entry name" value="Cytochrome Bc1 Complex, Chain C"/>
    <property type="match status" value="1"/>
</dbReference>
<dbReference type="InterPro" id="IPR005797">
    <property type="entry name" value="Cyt_b/b6_N"/>
</dbReference>
<dbReference type="InterPro" id="IPR027387">
    <property type="entry name" value="Cytb/b6-like_sf"/>
</dbReference>
<dbReference type="InterPro" id="IPR016174">
    <property type="entry name" value="Di-haem_cyt_TM"/>
</dbReference>
<dbReference type="PANTHER" id="PTHR19271">
    <property type="entry name" value="CYTOCHROME B"/>
    <property type="match status" value="1"/>
</dbReference>
<dbReference type="PANTHER" id="PTHR19271:SF16">
    <property type="entry name" value="CYTOCHROME B"/>
    <property type="match status" value="1"/>
</dbReference>
<dbReference type="Pfam" id="PF00033">
    <property type="entry name" value="Cytochrome_B"/>
    <property type="match status" value="1"/>
</dbReference>
<dbReference type="SUPFAM" id="SSF81342">
    <property type="entry name" value="Transmembrane di-heme cytochromes"/>
    <property type="match status" value="1"/>
</dbReference>
<dbReference type="PROSITE" id="PS51002">
    <property type="entry name" value="CYTB_NTER"/>
    <property type="match status" value="1"/>
</dbReference>
<gene>
    <name type="primary">MT-CYB</name>
    <name type="synonym">COB</name>
    <name type="synonym">CYTB</name>
    <name type="synonym">MTCYB</name>
</gene>
<evidence type="ECO:0000250" key="1"/>
<evidence type="ECO:0000250" key="2">
    <source>
        <dbReference type="UniProtKB" id="P00157"/>
    </source>
</evidence>
<evidence type="ECO:0000255" key="3">
    <source>
        <dbReference type="PROSITE-ProRule" id="PRU00968"/>
    </source>
</evidence>